<gene>
    <name type="primary">PLD6</name>
</gene>
<dbReference type="EC" id="3.1.4.-" evidence="3"/>
<dbReference type="SMR" id="E2RD63"/>
<dbReference type="FunCoup" id="E2RD63">
    <property type="interactions" value="12"/>
</dbReference>
<dbReference type="STRING" id="9615.ENSCAFP00000027279"/>
<dbReference type="PaxDb" id="9612-ENSCAFP00000027279"/>
<dbReference type="eggNOG" id="ENOG502RXG9">
    <property type="taxonomic scope" value="Eukaryota"/>
</dbReference>
<dbReference type="HOGENOM" id="CLU_080814_0_1_1"/>
<dbReference type="InParanoid" id="E2RD63"/>
<dbReference type="OMA" id="RIWEEFD"/>
<dbReference type="OrthoDB" id="5205528at2759"/>
<dbReference type="TreeFam" id="TF332817"/>
<dbReference type="Proteomes" id="UP000002254">
    <property type="component" value="Unplaced"/>
</dbReference>
<dbReference type="Proteomes" id="UP000694429">
    <property type="component" value="Unplaced"/>
</dbReference>
<dbReference type="Proteomes" id="UP000694542">
    <property type="component" value="Unplaced"/>
</dbReference>
<dbReference type="Proteomes" id="UP000805418">
    <property type="component" value="Unplaced"/>
</dbReference>
<dbReference type="GO" id="GO:0005794">
    <property type="term" value="C:Golgi apparatus"/>
    <property type="evidence" value="ECO:0007669"/>
    <property type="project" value="UniProtKB-SubCell"/>
</dbReference>
<dbReference type="GO" id="GO:0005741">
    <property type="term" value="C:mitochondrial outer membrane"/>
    <property type="evidence" value="ECO:0000250"/>
    <property type="project" value="UniProtKB"/>
</dbReference>
<dbReference type="GO" id="GO:0005739">
    <property type="term" value="C:mitochondrion"/>
    <property type="evidence" value="ECO:0000318"/>
    <property type="project" value="GO_Central"/>
</dbReference>
<dbReference type="GO" id="GO:0031965">
    <property type="term" value="C:nuclear membrane"/>
    <property type="evidence" value="ECO:0007669"/>
    <property type="project" value="UniProtKB-SubCell"/>
</dbReference>
<dbReference type="GO" id="GO:0005886">
    <property type="term" value="C:plasma membrane"/>
    <property type="evidence" value="ECO:0007669"/>
    <property type="project" value="UniProtKB-SubCell"/>
</dbReference>
<dbReference type="GO" id="GO:0035755">
    <property type="term" value="F:cardiolipin hydrolase activity"/>
    <property type="evidence" value="ECO:0000250"/>
    <property type="project" value="UniProtKB"/>
</dbReference>
<dbReference type="GO" id="GO:0042803">
    <property type="term" value="F:protein homodimerization activity"/>
    <property type="evidence" value="ECO:0000250"/>
    <property type="project" value="UniProtKB"/>
</dbReference>
<dbReference type="GO" id="GO:0016891">
    <property type="term" value="F:RNA endonuclease activity, producing 5'-phosphomonoesters"/>
    <property type="evidence" value="ECO:0000318"/>
    <property type="project" value="GO_Central"/>
</dbReference>
<dbReference type="GO" id="GO:0008270">
    <property type="term" value="F:zinc ion binding"/>
    <property type="evidence" value="ECO:0007669"/>
    <property type="project" value="UniProtKB-KW"/>
</dbReference>
<dbReference type="GO" id="GO:0016042">
    <property type="term" value="P:lipid catabolic process"/>
    <property type="evidence" value="ECO:0007669"/>
    <property type="project" value="UniProtKB-KW"/>
</dbReference>
<dbReference type="GO" id="GO:0051321">
    <property type="term" value="P:meiotic cell cycle"/>
    <property type="evidence" value="ECO:0000250"/>
    <property type="project" value="UniProtKB"/>
</dbReference>
<dbReference type="GO" id="GO:0008053">
    <property type="term" value="P:mitochondrial fusion"/>
    <property type="evidence" value="ECO:0000250"/>
    <property type="project" value="UniProtKB"/>
</dbReference>
<dbReference type="GO" id="GO:0030719">
    <property type="term" value="P:P granule organization"/>
    <property type="evidence" value="ECO:0000250"/>
    <property type="project" value="UniProtKB"/>
</dbReference>
<dbReference type="GO" id="GO:0034587">
    <property type="term" value="P:piRNA processing"/>
    <property type="evidence" value="ECO:0000318"/>
    <property type="project" value="GO_Central"/>
</dbReference>
<dbReference type="GO" id="GO:0007286">
    <property type="term" value="P:spermatid development"/>
    <property type="evidence" value="ECO:0000250"/>
    <property type="project" value="UniProtKB"/>
</dbReference>
<dbReference type="CDD" id="cd09171">
    <property type="entry name" value="PLDc_vPLD6_like"/>
    <property type="match status" value="1"/>
</dbReference>
<dbReference type="FunFam" id="3.30.870.10:FF:000030">
    <property type="entry name" value="mitochondrial cardiolipin hydrolase"/>
    <property type="match status" value="1"/>
</dbReference>
<dbReference type="Gene3D" id="3.30.870.10">
    <property type="entry name" value="Endonuclease Chain A"/>
    <property type="match status" value="1"/>
</dbReference>
<dbReference type="InterPro" id="IPR025202">
    <property type="entry name" value="PLD-like_dom"/>
</dbReference>
<dbReference type="InterPro" id="IPR051406">
    <property type="entry name" value="PLD_domain"/>
</dbReference>
<dbReference type="InterPro" id="IPR001736">
    <property type="entry name" value="PLipase_D/transphosphatidylase"/>
</dbReference>
<dbReference type="PANTHER" id="PTHR43856">
    <property type="entry name" value="CARDIOLIPIN HYDROLASE"/>
    <property type="match status" value="1"/>
</dbReference>
<dbReference type="PANTHER" id="PTHR43856:SF1">
    <property type="entry name" value="MITOCHONDRIAL CARDIOLIPIN HYDROLASE"/>
    <property type="match status" value="1"/>
</dbReference>
<dbReference type="Pfam" id="PF13091">
    <property type="entry name" value="PLDc_2"/>
    <property type="match status" value="1"/>
</dbReference>
<dbReference type="SMART" id="SM00155">
    <property type="entry name" value="PLDc"/>
    <property type="match status" value="1"/>
</dbReference>
<dbReference type="SUPFAM" id="SSF56024">
    <property type="entry name" value="Phospholipase D/nuclease"/>
    <property type="match status" value="1"/>
</dbReference>
<dbReference type="PROSITE" id="PS50035">
    <property type="entry name" value="PLD"/>
    <property type="match status" value="1"/>
</dbReference>
<feature type="chain" id="PRO_0000408333" description="Mitochondrial cardiolipin hydrolase">
    <location>
        <begin position="1"/>
        <end position="254"/>
    </location>
</feature>
<feature type="topological domain" description="Mitochondrial intermembrane" evidence="4">
    <location>
        <begin position="1"/>
        <end position="9"/>
    </location>
</feature>
<feature type="transmembrane region" description="Helical" evidence="4">
    <location>
        <begin position="10"/>
        <end position="32"/>
    </location>
</feature>
<feature type="topological domain" description="Cytoplasmic" evidence="4">
    <location>
        <begin position="33"/>
        <end position="254"/>
    </location>
</feature>
<feature type="domain" description="PLD phosphodiesterase" evidence="5">
    <location>
        <begin position="155"/>
        <end position="182"/>
    </location>
</feature>
<feature type="zinc finger region" description="C3H1-type; atypical">
    <location>
        <begin position="49"/>
        <end position="82"/>
    </location>
</feature>
<feature type="region of interest" description="Required for mitochondrial localization" evidence="1">
    <location>
        <begin position="1"/>
        <end position="43"/>
    </location>
</feature>
<feature type="active site" evidence="5">
    <location>
        <position position="160"/>
    </location>
</feature>
<feature type="active site" evidence="5">
    <location>
        <position position="162"/>
    </location>
</feature>
<feature type="active site" evidence="5">
    <location>
        <position position="167"/>
    </location>
</feature>
<proteinExistence type="inferred from homology"/>
<sequence length="254" mass="28565">MERFRWQVAAVAAVGLALALEALPSVLCWLRAGRRQQQRPPRRQVLFFPSQVTCTEALLQAPGEAPSGPPAGCRCSLPHGESSLSRLLRALLAARASLELCLFAFSSPQLGRAVQLLHQRGVRVRVITDCDYMALNGSQIGLLRKAGIQVRHDQDLGYMHHKFAIVDKKVLITGSLNWTTQAIQNNRENVLIMEDEEYVRLFLEEFERIWEEFNPTKYTFFPQKKTGTSLPPQVSCFGQLVSCHSKCSHHLSQV</sequence>
<evidence type="ECO:0000250" key="1"/>
<evidence type="ECO:0000250" key="2">
    <source>
        <dbReference type="UniProtKB" id="Q5SWZ9"/>
    </source>
</evidence>
<evidence type="ECO:0000250" key="3">
    <source>
        <dbReference type="UniProtKB" id="Q8N2A8"/>
    </source>
</evidence>
<evidence type="ECO:0000255" key="4"/>
<evidence type="ECO:0000255" key="5">
    <source>
        <dbReference type="PROSITE-ProRule" id="PRU00153"/>
    </source>
</evidence>
<evidence type="ECO:0000305" key="6"/>
<protein>
    <recommendedName>
        <fullName>Mitochondrial cardiolipin hydrolase</fullName>
        <ecNumber evidence="3">3.1.4.-</ecNumber>
    </recommendedName>
    <alternativeName>
        <fullName>Choline phosphatase 6</fullName>
    </alternativeName>
    <alternativeName>
        <fullName evidence="3">Mitochondrial phospholipase</fullName>
        <shortName evidence="3">MitoPLD</shortName>
    </alternativeName>
    <alternativeName>
        <fullName>Phosphatidylcholine-hydrolyzing phospholipase D6</fullName>
    </alternativeName>
    <alternativeName>
        <fullName>Phospholipase D6</fullName>
        <shortName>PLD 6</shortName>
    </alternativeName>
</protein>
<accession>E2RD63</accession>
<keyword id="KW-1003">Cell membrane</keyword>
<keyword id="KW-0221">Differentiation</keyword>
<keyword id="KW-0255">Endonuclease</keyword>
<keyword id="KW-0333">Golgi apparatus</keyword>
<keyword id="KW-0378">Hydrolase</keyword>
<keyword id="KW-0442">Lipid degradation</keyword>
<keyword id="KW-0443">Lipid metabolism</keyword>
<keyword id="KW-0469">Meiosis</keyword>
<keyword id="KW-0472">Membrane</keyword>
<keyword id="KW-0479">Metal-binding</keyword>
<keyword id="KW-0496">Mitochondrion</keyword>
<keyword id="KW-1000">Mitochondrion outer membrane</keyword>
<keyword id="KW-0540">Nuclease</keyword>
<keyword id="KW-0539">Nucleus</keyword>
<keyword id="KW-1185">Reference proteome</keyword>
<keyword id="KW-0744">Spermatogenesis</keyword>
<keyword id="KW-0812">Transmembrane</keyword>
<keyword id="KW-1133">Transmembrane helix</keyword>
<keyword id="KW-0862">Zinc</keyword>
<keyword id="KW-0863">Zinc-finger</keyword>
<comment type="function">
    <text evidence="2 3">Presents phospholipase and nuclease activities, depending on the different physiological conditions. Interaction with Mitoguardin (MIGA1 or MIGA2) affects the dimer conformation, facilitating the lipase activity over the nuclease activity. Plays a key role in mitochondrial fusion and fission via its phospholipase activity. In its phospholipase role, it uses the mitochondrial lipid cardiolipin as substrate to generate phosphatidate (PA or 1,2-diacyl-sn-glycero-3-phosphate), a second messenger signaling lipid. Production of PA facilitates Mitofusin-mediated fusion, whereas the cleavage of PA by the Lipin family of phosphatases produces diacylgycerol (DAG) which promotes mitochondrial fission. Both Lipin and DAG regulate mitochondrial dynamics and membrane fusion/fission, important processes for adapting mitochondrial metabolism to changes in cell physiology. Mitochondrial fusion enables cells to cope with the increased nucleotide demand during DNA synthesis (By similarity). Mitochondrial function and dynamics are closely associated with biological processes such as cell growth, proliferation, and differentiation. Mediator of MYC activity, promotes mitochondrial fusion and activates AMPK which in turn inhibits YAP/TAZ, thereby inducing cell growth and proliferation. The endonuclease activity plays a critical role in PIWI-interacting RNA (piRNA) biogenesis during spermatogenesis. Implicated in spermatogenesis and sperm fertility in testicular germ cells, its single strand-specific nuclease activity is critical for the biogenesis/maturation of PIWI-interacting RNA (piRNA). MOV10L1 selectively binds to piRNA precursors and funnels them to the endonuclease that catalyzes the first cleavage step of piRNA processing to generate piRNA intermediate fragments that are subsequently loaded to Piwi proteins. Cleaves either DNA or RNA substrates with similar affinity, producing a 5' phosphate end, in this way it participates in the processing of primary piRNA transcripts. piRNAs provide essential protection against the activity of mobile genetic elements. piRNA-mediated transposon silencing is thus critical for maintaining genome stability, in particular in germline cells when transposons are mobilized as a consequence of wide-spread genomic demethylation. PA may act as signaling molecule in the recognition/transport of the precursor RNAs of primary piRNAs. Interacts with tesmin in testes, suggesting a role in spermatogenesis via association with its interacting partner (By similarity).</text>
</comment>
<comment type="catalytic activity">
    <reaction evidence="3">
        <text>a cardiolipin + H2O = a 1,2-diacyl-sn-glycero-3-phospho-(1'-sn-glycerol) + a 1,2-diacyl-sn-glycero-3-phosphate + H(+)</text>
        <dbReference type="Rhea" id="RHEA:44884"/>
        <dbReference type="ChEBI" id="CHEBI:15377"/>
        <dbReference type="ChEBI" id="CHEBI:15378"/>
        <dbReference type="ChEBI" id="CHEBI:58608"/>
        <dbReference type="ChEBI" id="CHEBI:62237"/>
        <dbReference type="ChEBI" id="CHEBI:64716"/>
    </reaction>
    <physiologicalReaction direction="left-to-right" evidence="3">
        <dbReference type="Rhea" id="RHEA:44885"/>
    </physiologicalReaction>
</comment>
<comment type="activity regulation">
    <text evidence="2 3">Single stranded DNA (ssDNA) hydrolase activity does not depend upon, but is stimulated by the presence of Ca(2+) and Mn(2+) (By similarity). MIGA1 and MIGA2 increase PLD6 self-association affinity and affects the homodimer conformation facilitating its phospholipase activity over the nuclease activity. MYC induces its expression and stimulates its phospholipase activity (By similarity).</text>
</comment>
<comment type="subunit">
    <text evidence="2 3">Homodimer (By similarity). Interacts with MOV10L1. Interacts with MIGA1 and MIGA2; possibly facilitating homodimer formation (By similarity). Interacts with GK2 (By similarity).</text>
</comment>
<comment type="subcellular location">
    <subcellularLocation>
        <location evidence="2">Mitochondrion outer membrane</location>
        <topology evidence="2">Single-pass membrane protein</topology>
    </subcellularLocation>
    <subcellularLocation>
        <location evidence="2">Nucleus membrane</location>
    </subcellularLocation>
    <subcellularLocation>
        <location evidence="2">Cell membrane</location>
    </subcellularLocation>
    <subcellularLocation>
        <location evidence="2">Golgi apparatus</location>
    </subcellularLocation>
    <text evidence="2">Localization in the mitochondrial outer membrane is found in different cell types where phospholipase was the predominant activity, however, in pachytene spermatocytes and spermatids of mouse testes where nuclease activity is predominant, localization is restricted to the Golgi, suggesting this enzyme is localized in different subcellular compartments depending on the role (phospholipase or nuclease) it needs to play in each cell type and developmental stage.</text>
</comment>
<comment type="domain">
    <text evidence="3">In contrast to other members of the phospholipase D family, contains only one PLD phosphodiesterase domain, suggesting that it has a single half-catalytic and requires homodimerization to form a complete active site.</text>
</comment>
<comment type="similarity">
    <text evidence="6">Belongs to the phospholipase D family. MitoPLD/Zucchini subfamily.</text>
</comment>
<comment type="caution">
    <text evidence="2">Evidence for subcellular location in the Golgi was determined in pachytene spermatocytes and spermatids in mouse testes. They observe that the ectopically expressed PLD6 protein was localized to the mitochondria in PLD6-transfected cells. Authors claim a possible explanation for the contradictory results is that previous studies have reported the localization of exogenous PLD6, but not endogenous PLD6, in cultured cells. The reason for differences observed in subcellular localization of exogenous and endogenous PLD6 is not clear but one attributable reason may be that different types of anti-PLD6 antibodies have been used in previous studies.</text>
</comment>
<organism>
    <name type="scientific">Canis lupus familiaris</name>
    <name type="common">Dog</name>
    <name type="synonym">Canis familiaris</name>
    <dbReference type="NCBI Taxonomy" id="9615"/>
    <lineage>
        <taxon>Eukaryota</taxon>
        <taxon>Metazoa</taxon>
        <taxon>Chordata</taxon>
        <taxon>Craniata</taxon>
        <taxon>Vertebrata</taxon>
        <taxon>Euteleostomi</taxon>
        <taxon>Mammalia</taxon>
        <taxon>Eutheria</taxon>
        <taxon>Laurasiatheria</taxon>
        <taxon>Carnivora</taxon>
        <taxon>Caniformia</taxon>
        <taxon>Canidae</taxon>
        <taxon>Canis</taxon>
    </lineage>
</organism>
<reference key="1">
    <citation type="journal article" date="2005" name="Nature">
        <title>Genome sequence, comparative analysis and haplotype structure of the domestic dog.</title>
        <authorList>
            <person name="Lindblad-Toh K."/>
            <person name="Wade C.M."/>
            <person name="Mikkelsen T.S."/>
            <person name="Karlsson E.K."/>
            <person name="Jaffe D.B."/>
            <person name="Kamal M."/>
            <person name="Clamp M."/>
            <person name="Chang J.L."/>
            <person name="Kulbokas E.J. III"/>
            <person name="Zody M.C."/>
            <person name="Mauceli E."/>
            <person name="Xie X."/>
            <person name="Breen M."/>
            <person name="Wayne R.K."/>
            <person name="Ostrander E.A."/>
            <person name="Ponting C.P."/>
            <person name="Galibert F."/>
            <person name="Smith D.R."/>
            <person name="deJong P.J."/>
            <person name="Kirkness E.F."/>
            <person name="Alvarez P."/>
            <person name="Biagi T."/>
            <person name="Brockman W."/>
            <person name="Butler J."/>
            <person name="Chin C.-W."/>
            <person name="Cook A."/>
            <person name="Cuff J."/>
            <person name="Daly M.J."/>
            <person name="DeCaprio D."/>
            <person name="Gnerre S."/>
            <person name="Grabherr M."/>
            <person name="Kellis M."/>
            <person name="Kleber M."/>
            <person name="Bardeleben C."/>
            <person name="Goodstadt L."/>
            <person name="Heger A."/>
            <person name="Hitte C."/>
            <person name="Kim L."/>
            <person name="Koepfli K.-P."/>
            <person name="Parker H.G."/>
            <person name="Pollinger J.P."/>
            <person name="Searle S.M.J."/>
            <person name="Sutter N.B."/>
            <person name="Thomas R."/>
            <person name="Webber C."/>
            <person name="Baldwin J."/>
            <person name="Abebe A."/>
            <person name="Abouelleil A."/>
            <person name="Aftuck L."/>
            <person name="Ait-Zahra M."/>
            <person name="Aldredge T."/>
            <person name="Allen N."/>
            <person name="An P."/>
            <person name="Anderson S."/>
            <person name="Antoine C."/>
            <person name="Arachchi H."/>
            <person name="Aslam A."/>
            <person name="Ayotte L."/>
            <person name="Bachantsang P."/>
            <person name="Barry A."/>
            <person name="Bayul T."/>
            <person name="Benamara M."/>
            <person name="Berlin A."/>
            <person name="Bessette D."/>
            <person name="Blitshteyn B."/>
            <person name="Bloom T."/>
            <person name="Blye J."/>
            <person name="Boguslavskiy L."/>
            <person name="Bonnet C."/>
            <person name="Boukhgalter B."/>
            <person name="Brown A."/>
            <person name="Cahill P."/>
            <person name="Calixte N."/>
            <person name="Camarata J."/>
            <person name="Cheshatsang Y."/>
            <person name="Chu J."/>
            <person name="Citroen M."/>
            <person name="Collymore A."/>
            <person name="Cooke P."/>
            <person name="Dawoe T."/>
            <person name="Daza R."/>
            <person name="Decktor K."/>
            <person name="DeGray S."/>
            <person name="Dhargay N."/>
            <person name="Dooley K."/>
            <person name="Dooley K."/>
            <person name="Dorje P."/>
            <person name="Dorjee K."/>
            <person name="Dorris L."/>
            <person name="Duffey N."/>
            <person name="Dupes A."/>
            <person name="Egbiremolen O."/>
            <person name="Elong R."/>
            <person name="Falk J."/>
            <person name="Farina A."/>
            <person name="Faro S."/>
            <person name="Ferguson D."/>
            <person name="Ferreira P."/>
            <person name="Fisher S."/>
            <person name="FitzGerald M."/>
            <person name="Foley K."/>
            <person name="Foley C."/>
            <person name="Franke A."/>
            <person name="Friedrich D."/>
            <person name="Gage D."/>
            <person name="Garber M."/>
            <person name="Gearin G."/>
            <person name="Giannoukos G."/>
            <person name="Goode T."/>
            <person name="Goyette A."/>
            <person name="Graham J."/>
            <person name="Grandbois E."/>
            <person name="Gyaltsen K."/>
            <person name="Hafez N."/>
            <person name="Hagopian D."/>
            <person name="Hagos B."/>
            <person name="Hall J."/>
            <person name="Healy C."/>
            <person name="Hegarty R."/>
            <person name="Honan T."/>
            <person name="Horn A."/>
            <person name="Houde N."/>
            <person name="Hughes L."/>
            <person name="Hunnicutt L."/>
            <person name="Husby M."/>
            <person name="Jester B."/>
            <person name="Jones C."/>
            <person name="Kamat A."/>
            <person name="Kanga B."/>
            <person name="Kells C."/>
            <person name="Khazanovich D."/>
            <person name="Kieu A.C."/>
            <person name="Kisner P."/>
            <person name="Kumar M."/>
            <person name="Lance K."/>
            <person name="Landers T."/>
            <person name="Lara M."/>
            <person name="Lee W."/>
            <person name="Leger J.-P."/>
            <person name="Lennon N."/>
            <person name="Leuper L."/>
            <person name="LeVine S."/>
            <person name="Liu J."/>
            <person name="Liu X."/>
            <person name="Lokyitsang Y."/>
            <person name="Lokyitsang T."/>
            <person name="Lui A."/>
            <person name="Macdonald J."/>
            <person name="Major J."/>
            <person name="Marabella R."/>
            <person name="Maru K."/>
            <person name="Matthews C."/>
            <person name="McDonough S."/>
            <person name="Mehta T."/>
            <person name="Meldrim J."/>
            <person name="Melnikov A."/>
            <person name="Meneus L."/>
            <person name="Mihalev A."/>
            <person name="Mihova T."/>
            <person name="Miller K."/>
            <person name="Mittelman R."/>
            <person name="Mlenga V."/>
            <person name="Mulrain L."/>
            <person name="Munson G."/>
            <person name="Navidi A."/>
            <person name="Naylor J."/>
            <person name="Nguyen T."/>
            <person name="Nguyen N."/>
            <person name="Nguyen C."/>
            <person name="Nguyen T."/>
            <person name="Nicol R."/>
            <person name="Norbu N."/>
            <person name="Norbu C."/>
            <person name="Novod N."/>
            <person name="Nyima T."/>
            <person name="Olandt P."/>
            <person name="O'Neill B."/>
            <person name="O'Neill K."/>
            <person name="Osman S."/>
            <person name="Oyono L."/>
            <person name="Patti C."/>
            <person name="Perrin D."/>
            <person name="Phunkhang P."/>
            <person name="Pierre F."/>
            <person name="Priest M."/>
            <person name="Rachupka A."/>
            <person name="Raghuraman S."/>
            <person name="Rameau R."/>
            <person name="Ray V."/>
            <person name="Raymond C."/>
            <person name="Rege F."/>
            <person name="Rise C."/>
            <person name="Rogers J."/>
            <person name="Rogov P."/>
            <person name="Sahalie J."/>
            <person name="Settipalli S."/>
            <person name="Sharpe T."/>
            <person name="Shea T."/>
            <person name="Sheehan M."/>
            <person name="Sherpa N."/>
            <person name="Shi J."/>
            <person name="Shih D."/>
            <person name="Sloan J."/>
            <person name="Smith C."/>
            <person name="Sparrow T."/>
            <person name="Stalker J."/>
            <person name="Stange-Thomann N."/>
            <person name="Stavropoulos S."/>
            <person name="Stone C."/>
            <person name="Stone S."/>
            <person name="Sykes S."/>
            <person name="Tchuinga P."/>
            <person name="Tenzing P."/>
            <person name="Tesfaye S."/>
            <person name="Thoulutsang D."/>
            <person name="Thoulutsang Y."/>
            <person name="Topham K."/>
            <person name="Topping I."/>
            <person name="Tsamla T."/>
            <person name="Vassiliev H."/>
            <person name="Venkataraman V."/>
            <person name="Vo A."/>
            <person name="Wangchuk T."/>
            <person name="Wangdi T."/>
            <person name="Weiand M."/>
            <person name="Wilkinson J."/>
            <person name="Wilson A."/>
            <person name="Yadav S."/>
            <person name="Yang S."/>
            <person name="Yang X."/>
            <person name="Young G."/>
            <person name="Yu Q."/>
            <person name="Zainoun J."/>
            <person name="Zembek L."/>
            <person name="Zimmer A."/>
            <person name="Lander E.S."/>
        </authorList>
    </citation>
    <scope>NUCLEOTIDE SEQUENCE [LARGE SCALE GENOMIC DNA]</scope>
    <source>
        <strain>Boxer</strain>
    </source>
</reference>
<name>PLD6_CANLF</name>